<gene>
    <name evidence="1" type="primary">mntP</name>
    <name type="ordered locus">YPN_2369</name>
    <name type="ORF">YP516_2667</name>
</gene>
<keyword id="KW-0997">Cell inner membrane</keyword>
<keyword id="KW-1003">Cell membrane</keyword>
<keyword id="KW-0406">Ion transport</keyword>
<keyword id="KW-0464">Manganese</keyword>
<keyword id="KW-0472">Membrane</keyword>
<keyword id="KW-0812">Transmembrane</keyword>
<keyword id="KW-1133">Transmembrane helix</keyword>
<keyword id="KW-0813">Transport</keyword>
<organism>
    <name type="scientific">Yersinia pestis bv. Antiqua (strain Nepal516)</name>
    <dbReference type="NCBI Taxonomy" id="377628"/>
    <lineage>
        <taxon>Bacteria</taxon>
        <taxon>Pseudomonadati</taxon>
        <taxon>Pseudomonadota</taxon>
        <taxon>Gammaproteobacteria</taxon>
        <taxon>Enterobacterales</taxon>
        <taxon>Yersiniaceae</taxon>
        <taxon>Yersinia</taxon>
    </lineage>
</organism>
<accession>Q1CH33</accession>
<accession>C4GUS2</accession>
<feature type="chain" id="PRO_0000296945" description="Putative manganese efflux pump MntP">
    <location>
        <begin position="1"/>
        <end position="189"/>
    </location>
</feature>
<feature type="transmembrane region" description="Helical" evidence="1">
    <location>
        <begin position="3"/>
        <end position="23"/>
    </location>
</feature>
<feature type="transmembrane region" description="Helical" evidence="1">
    <location>
        <begin position="41"/>
        <end position="61"/>
    </location>
</feature>
<feature type="transmembrane region" description="Helical" evidence="1">
    <location>
        <begin position="65"/>
        <end position="85"/>
    </location>
</feature>
<feature type="transmembrane region" description="Helical" evidence="1">
    <location>
        <begin position="104"/>
        <end position="124"/>
    </location>
</feature>
<feature type="transmembrane region" description="Helical" evidence="1">
    <location>
        <begin position="132"/>
        <end position="152"/>
    </location>
</feature>
<feature type="transmembrane region" description="Helical" evidence="1">
    <location>
        <begin position="167"/>
        <end position="187"/>
    </location>
</feature>
<evidence type="ECO:0000255" key="1">
    <source>
        <dbReference type="HAMAP-Rule" id="MF_01521"/>
    </source>
</evidence>
<proteinExistence type="inferred from homology"/>
<reference key="1">
    <citation type="journal article" date="2006" name="J. Bacteriol.">
        <title>Complete genome sequence of Yersinia pestis strains Antiqua and Nepal516: evidence of gene reduction in an emerging pathogen.</title>
        <authorList>
            <person name="Chain P.S.G."/>
            <person name="Hu P."/>
            <person name="Malfatti S.A."/>
            <person name="Radnedge L."/>
            <person name="Larimer F."/>
            <person name="Vergez L.M."/>
            <person name="Worsham P."/>
            <person name="Chu M.C."/>
            <person name="Andersen G.L."/>
        </authorList>
    </citation>
    <scope>NUCLEOTIDE SEQUENCE [LARGE SCALE GENOMIC DNA]</scope>
    <source>
        <strain>Nepal516</strain>
    </source>
</reference>
<reference key="2">
    <citation type="submission" date="2009-04" db="EMBL/GenBank/DDBJ databases">
        <title>Yersinia pestis Nepal516A whole genome shotgun sequencing project.</title>
        <authorList>
            <person name="Plunkett G. III"/>
            <person name="Anderson B.D."/>
            <person name="Baumler D.J."/>
            <person name="Burland V."/>
            <person name="Cabot E.L."/>
            <person name="Glasner J.D."/>
            <person name="Mau B."/>
            <person name="Neeno-Eckwall E."/>
            <person name="Perna N.T."/>
            <person name="Munk A.C."/>
            <person name="Tapia R."/>
            <person name="Green L.D."/>
            <person name="Rogers Y.C."/>
            <person name="Detter J.C."/>
            <person name="Bruce D.C."/>
            <person name="Brettin T.S."/>
        </authorList>
    </citation>
    <scope>NUCLEOTIDE SEQUENCE [LARGE SCALE GENOMIC DNA]</scope>
    <source>
        <strain>Nepal516</strain>
    </source>
</reference>
<sequence>MNLSATIILAFAMSMDAFAASIGKGATLYKPRFREALRTGLIFGVIEAITPLIGWCIGLFASQYIMEWDHWIAFSLLFILGCRMIFEGMKQRVAETEKMRSHSFWVLVTTAIATSLDAMAIGVGLAFLQVDIVHTAMAIGLATMIMATLGMLIGRYIGPLLGKRAEIIGGIVLIGIGFNILYEHMHLTA</sequence>
<name>MNTP_YERPN</name>
<dbReference type="EMBL" id="CP000305">
    <property type="protein sequence ID" value="ABG18697.1"/>
    <property type="molecule type" value="Genomic_DNA"/>
</dbReference>
<dbReference type="EMBL" id="ACNQ01000013">
    <property type="protein sequence ID" value="EEO76459.1"/>
    <property type="molecule type" value="Genomic_DNA"/>
</dbReference>
<dbReference type="RefSeq" id="WP_002211065.1">
    <property type="nucleotide sequence ID" value="NZ_ACNQ01000013.1"/>
</dbReference>
<dbReference type="GeneID" id="57976826"/>
<dbReference type="KEGG" id="ypn:YPN_2369"/>
<dbReference type="HOGENOM" id="CLU_096410_0_0_6"/>
<dbReference type="Proteomes" id="UP000008936">
    <property type="component" value="Chromosome"/>
</dbReference>
<dbReference type="GO" id="GO:0005886">
    <property type="term" value="C:plasma membrane"/>
    <property type="evidence" value="ECO:0007669"/>
    <property type="project" value="UniProtKB-SubCell"/>
</dbReference>
<dbReference type="GO" id="GO:0005384">
    <property type="term" value="F:manganese ion transmembrane transporter activity"/>
    <property type="evidence" value="ECO:0007669"/>
    <property type="project" value="UniProtKB-UniRule"/>
</dbReference>
<dbReference type="HAMAP" id="MF_01521">
    <property type="entry name" value="MntP_pump"/>
    <property type="match status" value="1"/>
</dbReference>
<dbReference type="InterPro" id="IPR003810">
    <property type="entry name" value="Mntp/YtaF"/>
</dbReference>
<dbReference type="InterPro" id="IPR022929">
    <property type="entry name" value="Put_MntP"/>
</dbReference>
<dbReference type="NCBIfam" id="NF008546">
    <property type="entry name" value="PRK11469.1"/>
    <property type="match status" value="1"/>
</dbReference>
<dbReference type="PANTHER" id="PTHR35529">
    <property type="entry name" value="MANGANESE EFFLUX PUMP MNTP-RELATED"/>
    <property type="match status" value="1"/>
</dbReference>
<dbReference type="PANTHER" id="PTHR35529:SF1">
    <property type="entry name" value="MANGANESE EFFLUX PUMP MNTP-RELATED"/>
    <property type="match status" value="1"/>
</dbReference>
<dbReference type="Pfam" id="PF02659">
    <property type="entry name" value="Mntp"/>
    <property type="match status" value="1"/>
</dbReference>
<comment type="function">
    <text evidence="1">Probably functions as a manganese efflux pump.</text>
</comment>
<comment type="subcellular location">
    <subcellularLocation>
        <location evidence="1">Cell inner membrane</location>
        <topology evidence="1">Multi-pass membrane protein</topology>
    </subcellularLocation>
</comment>
<comment type="similarity">
    <text evidence="1">Belongs to the MntP (TC 9.B.29) family.</text>
</comment>
<protein>
    <recommendedName>
        <fullName evidence="1">Putative manganese efflux pump MntP</fullName>
    </recommendedName>
</protein>